<organism>
    <name type="scientific">Alternaria alternata</name>
    <name type="common">Alternaria rot fungus</name>
    <name type="synonym">Torula alternata</name>
    <dbReference type="NCBI Taxonomy" id="5599"/>
    <lineage>
        <taxon>Eukaryota</taxon>
        <taxon>Fungi</taxon>
        <taxon>Dikarya</taxon>
        <taxon>Ascomycota</taxon>
        <taxon>Pezizomycotina</taxon>
        <taxon>Dothideomycetes</taxon>
        <taxon>Pleosporomycetidae</taxon>
        <taxon>Pleosporales</taxon>
        <taxon>Pleosporineae</taxon>
        <taxon>Pleosporaceae</taxon>
        <taxon>Alternaria</taxon>
        <taxon>Alternaria sect. Alternaria</taxon>
        <taxon>Alternaria alternata complex</taxon>
    </lineage>
</organism>
<proteinExistence type="evidence at transcript level"/>
<evidence type="ECO:0000255" key="1"/>
<evidence type="ECO:0000255" key="2">
    <source>
        <dbReference type="PROSITE-ProRule" id="PRU00498"/>
    </source>
</evidence>
<evidence type="ECO:0000256" key="3">
    <source>
        <dbReference type="SAM" id="MobiDB-lite"/>
    </source>
</evidence>
<evidence type="ECO:0000269" key="4">
    <source>
    </source>
</evidence>
<evidence type="ECO:0000269" key="5">
    <source>
    </source>
</evidence>
<evidence type="ECO:0000303" key="6">
    <source>
    </source>
</evidence>
<evidence type="ECO:0000305" key="7"/>
<evidence type="ECO:0000305" key="8">
    <source>
    </source>
</evidence>
<dbReference type="EMBL" id="PDXD01000010">
    <property type="protein sequence ID" value="RYN76906.1"/>
    <property type="molecule type" value="Genomic_DNA"/>
</dbReference>
<dbReference type="GlyCosmos" id="A0A4Q4NJ90">
    <property type="glycosylation" value="2 sites, No reported glycans"/>
</dbReference>
<dbReference type="VEuPathDB" id="FungiDB:CC77DRAFT_939415"/>
<dbReference type="Proteomes" id="UP000291422">
    <property type="component" value="Unassembled WGS sequence"/>
</dbReference>
<dbReference type="GO" id="GO:0005886">
    <property type="term" value="C:plasma membrane"/>
    <property type="evidence" value="ECO:0007669"/>
    <property type="project" value="UniProtKB-SubCell"/>
</dbReference>
<dbReference type="GO" id="GO:0022857">
    <property type="term" value="F:transmembrane transporter activity"/>
    <property type="evidence" value="ECO:0007669"/>
    <property type="project" value="InterPro"/>
</dbReference>
<dbReference type="CDD" id="cd17323">
    <property type="entry name" value="MFS_Tpo1_MDR_like"/>
    <property type="match status" value="1"/>
</dbReference>
<dbReference type="FunFam" id="1.20.1250.20:FF:000082">
    <property type="entry name" value="MFS multidrug transporter, putative"/>
    <property type="match status" value="1"/>
</dbReference>
<dbReference type="Gene3D" id="1.20.1250.20">
    <property type="entry name" value="MFS general substrate transporter like domains"/>
    <property type="match status" value="1"/>
</dbReference>
<dbReference type="InterPro" id="IPR011701">
    <property type="entry name" value="MFS"/>
</dbReference>
<dbReference type="InterPro" id="IPR020846">
    <property type="entry name" value="MFS_dom"/>
</dbReference>
<dbReference type="InterPro" id="IPR036259">
    <property type="entry name" value="MFS_trans_sf"/>
</dbReference>
<dbReference type="PANTHER" id="PTHR23502">
    <property type="entry name" value="MAJOR FACILITATOR SUPERFAMILY"/>
    <property type="match status" value="1"/>
</dbReference>
<dbReference type="PANTHER" id="PTHR23502:SF135">
    <property type="entry name" value="MAJOR FACILITATOR SUPERFAMILY (MFS) PROFILE DOMAIN-CONTAINING PROTEIN-RELATED"/>
    <property type="match status" value="1"/>
</dbReference>
<dbReference type="Pfam" id="PF07690">
    <property type="entry name" value="MFS_1"/>
    <property type="match status" value="1"/>
</dbReference>
<dbReference type="SUPFAM" id="SSF103473">
    <property type="entry name" value="MFS general substrate transporter"/>
    <property type="match status" value="1"/>
</dbReference>
<dbReference type="PROSITE" id="PS50850">
    <property type="entry name" value="MFS"/>
    <property type="match status" value="1"/>
</dbReference>
<comment type="function">
    <text evidence="5">MFS-type efflux pump involved in the modulation susceptibility to various compounds including cumyl hydroperoxide, potassium superoxide, many singlet oxygen-generating compounds (eosin Y, rose Bengal, hematoporphyrin, methylene blue, and cercosporin), and the cell wall biosynthesis inhibitor Congo red (PubMed:28060864). Involved in oxidative stress tolerance, colonization, and lesion formation (PubMed:28060864).</text>
</comment>
<comment type="subcellular location">
    <subcellularLocation>
        <location evidence="8">Cell membrane</location>
        <topology evidence="1">Multi-pass membrane protein</topology>
    </subcellularLocation>
</comment>
<comment type="induction">
    <text evidence="4 5">Expression is regulated by the Yap1 transcription activator, the Hog1 and Fus3 mitogen-activated protein (MAP) kinases, the two component histidine kinase, and the Skn7 response regulator.</text>
</comment>
<comment type="disruption phenotype">
    <text evidence="5">Displays profound hypersensitivities to cumyl hydroperoxide, potassium superoxide, many singlet oxygen-generating compounds (eosin Y, rose Bengal, hematoporphyrin, methylene blue, and cercosporin), and the cell wall biosynthesis inhibitor, Congo red (PubMed:28060864). Also increases sensitivity to copper ions, clotrimazole, fludioxonil, and kocide fungicides, 2-chloro-5-hydroxypyridine (CHP), and 2,3,5-triiodobenzoic acid (TIBA) (PubMed:28060864). Leads to smaller necrotic lesions on leaves of a susceptible citrus cultivar (PubMed:28060864).</text>
</comment>
<comment type="similarity">
    <text evidence="7">Belongs to the major facilitator superfamily.</text>
</comment>
<sequence length="489" mass="53131">MAHSTAGDRDPEVGSEQHSSIAQLHTESMSDPWGDSNSPENPLNWPAPKKNFHVAIVSIFTLTANLAATMFAPGAPQLAKEFNITNSTVEAMTVSLYVLGFAFGPLLLAPLSELYGRLIIYNACNAVYIAFTVGCAFSTNVSMFLVFRFLCGCAASGPMSIGGGTVADITPQEERGKAMALFAMGPLLGPVLGPIIGGYVSQYTNWRWTFRIILIMSGIIGLATMFFMRETNAAVLLRRKAKRSPKDAEGMELELDKTKKETPSQVLVRAITRPFKMLLFSPIVLLISLYTGVLFGLIFLLFTTFPTVFQGVYGFDEGTSGLAYLGLGIGMFLGLVVFSILSDKLLGQKQGGTVSKPEQRLILMKWFGPITPLGCFMYGWSAYHHVHWIVPILGTSIIGFGSLFVVIPGQIYLVDSFGAEAAASALAANLLVRSPFGAFLGLVAAPLYDRLSLGWGNSVLGFITLAFTPVPWLFYRYGETLRTRFVVKL</sequence>
<keyword id="KW-1003">Cell membrane</keyword>
<keyword id="KW-0325">Glycoprotein</keyword>
<keyword id="KW-0472">Membrane</keyword>
<keyword id="KW-0812">Transmembrane</keyword>
<keyword id="KW-1133">Transmembrane helix</keyword>
<keyword id="KW-0813">Transport</keyword>
<keyword id="KW-0843">Virulence</keyword>
<feature type="chain" id="PRO_0000452754" description="MFS-type transporter MFS19">
    <location>
        <begin position="1"/>
        <end position="489"/>
    </location>
</feature>
<feature type="transmembrane region" description="Helical" evidence="1">
    <location>
        <begin position="52"/>
        <end position="72"/>
    </location>
</feature>
<feature type="transmembrane region" description="Helical" evidence="1">
    <location>
        <begin position="91"/>
        <end position="111"/>
    </location>
</feature>
<feature type="transmembrane region" description="Helical" evidence="1">
    <location>
        <begin position="127"/>
        <end position="147"/>
    </location>
</feature>
<feature type="transmembrane region" description="Helical" evidence="1">
    <location>
        <begin position="149"/>
        <end position="169"/>
    </location>
</feature>
<feature type="transmembrane region" description="Helical" evidence="1">
    <location>
        <begin position="180"/>
        <end position="200"/>
    </location>
</feature>
<feature type="transmembrane region" description="Helical" evidence="1">
    <location>
        <begin position="208"/>
        <end position="228"/>
    </location>
</feature>
<feature type="transmembrane region" description="Helical" evidence="1">
    <location>
        <begin position="282"/>
        <end position="302"/>
    </location>
</feature>
<feature type="transmembrane region" description="Helical" evidence="1">
    <location>
        <begin position="321"/>
        <end position="341"/>
    </location>
</feature>
<feature type="transmembrane region" description="Helical" evidence="1">
    <location>
        <begin position="361"/>
        <end position="381"/>
    </location>
</feature>
<feature type="transmembrane region" description="Helical" evidence="1">
    <location>
        <begin position="388"/>
        <end position="408"/>
    </location>
</feature>
<feature type="transmembrane region" description="Helical" evidence="1">
    <location>
        <begin position="425"/>
        <end position="445"/>
    </location>
</feature>
<feature type="transmembrane region" description="Helical" evidence="1">
    <location>
        <begin position="454"/>
        <end position="474"/>
    </location>
</feature>
<feature type="region of interest" description="Disordered" evidence="3">
    <location>
        <begin position="1"/>
        <end position="42"/>
    </location>
</feature>
<feature type="compositionally biased region" description="Basic and acidic residues" evidence="3">
    <location>
        <begin position="1"/>
        <end position="12"/>
    </location>
</feature>
<feature type="compositionally biased region" description="Polar residues" evidence="3">
    <location>
        <begin position="16"/>
        <end position="41"/>
    </location>
</feature>
<feature type="glycosylation site" description="N-linked (GlcNAc...) asparagine" evidence="2">
    <location>
        <position position="83"/>
    </location>
</feature>
<feature type="glycosylation site" description="N-linked (GlcNAc...) asparagine" evidence="2">
    <location>
        <position position="86"/>
    </location>
</feature>
<name>MFS19_ALTAL</name>
<protein>
    <recommendedName>
        <fullName evidence="6">MFS-type transporter MFS19</fullName>
    </recommendedName>
</protein>
<reference key="1">
    <citation type="journal article" date="2019" name="Front. Microbiol.">
        <title>Genomics evolutionary history and diagnostics of the Alternaria alternata species group including apple and asian pear pathotypes.</title>
        <authorList>
            <person name="Armitage A.D."/>
            <person name="Cockerton H.M."/>
            <person name="Sreenivasaprasad S."/>
            <person name="Woodhall J."/>
            <person name="Lane C.R."/>
            <person name="Harrison R.J."/>
            <person name="Clarkson J.P."/>
        </authorList>
    </citation>
    <scope>NUCLEOTIDE SEQUENCE [LARGE SCALE GENOMIC DNA]</scope>
    <source>
        <strain>FERA 1177</strain>
    </source>
</reference>
<reference key="2">
    <citation type="journal article" date="2011" name="Curr. Microbiol.">
        <title>Cellular responses required for oxidative stress tolerance, colonization, and lesion formation by the necrotrophic fungus Alternaria alternata in citrus.</title>
        <authorList>
            <person name="Lin C.H."/>
            <person name="Yang S.L."/>
            <person name="Chung K.R."/>
        </authorList>
    </citation>
    <scope>INDUCTION</scope>
</reference>
<reference key="3">
    <citation type="journal article" date="2017" name="PLoS ONE">
        <title>A Major Facilitator Superfamily Transporter-Mediated Resistance to Oxidative Stress and Fungicides Requires Yap1, Skn7, and MAP Kinases in the Citrus Fungal Pathogen Alternaria alternata.</title>
        <authorList>
            <person name="Chen L.H."/>
            <person name="Tsai H.C."/>
            <person name="Yu P.L."/>
            <person name="Chung K.R."/>
        </authorList>
    </citation>
    <scope>FUNCTION</scope>
    <scope>DISRUPTION PHENOTYPE</scope>
    <scope>INDUCTION</scope>
</reference>
<accession>A0A4Q4NJ90</accession>
<gene>
    <name evidence="6" type="primary">MFS19</name>
    <name type="ORF">AA0117_g5322</name>
</gene>